<organism>
    <name type="scientific">Oryza sativa subsp. indica</name>
    <name type="common">Rice</name>
    <dbReference type="NCBI Taxonomy" id="39946"/>
    <lineage>
        <taxon>Eukaryota</taxon>
        <taxon>Viridiplantae</taxon>
        <taxon>Streptophyta</taxon>
        <taxon>Embryophyta</taxon>
        <taxon>Tracheophyta</taxon>
        <taxon>Spermatophyta</taxon>
        <taxon>Magnoliopsida</taxon>
        <taxon>Liliopsida</taxon>
        <taxon>Poales</taxon>
        <taxon>Poaceae</taxon>
        <taxon>BOP clade</taxon>
        <taxon>Oryzoideae</taxon>
        <taxon>Oryzeae</taxon>
        <taxon>Oryzinae</taxon>
        <taxon>Oryza</taxon>
        <taxon>Oryza sativa</taxon>
    </lineage>
</organism>
<evidence type="ECO:0000250" key="1"/>
<evidence type="ECO:0000255" key="2">
    <source>
        <dbReference type="PROSITE-ProRule" id="PRU00981"/>
    </source>
</evidence>
<name>ILI3_ORYSI</name>
<sequence length="91" mass="9951">MSSRRGGGGGGGRITDEEINELISKLQALLPESSRSRGASRSSASKLLKETCSYIKSLHREVDDLSDRLSELMSTMDNNSPQAEIIRSLLR</sequence>
<gene>
    <name type="primary">ILI3</name>
    <name type="synonym">BHLH153</name>
    <name type="ORF">OsI_10202</name>
</gene>
<proteinExistence type="inferred from homology"/>
<protein>
    <recommendedName>
        <fullName>Transcription factor ILI3</fullName>
    </recommendedName>
    <alternativeName>
        <fullName>Basic helix-loop-helix protein 153</fullName>
    </alternativeName>
    <alternativeName>
        <fullName>Protein INCREASED LEAF INCLINATION 3</fullName>
    </alternativeName>
    <alternativeName>
        <fullName>bHLH transcription factor bHLH153</fullName>
    </alternativeName>
</protein>
<feature type="chain" id="PRO_0000429093" description="Transcription factor ILI3">
    <location>
        <begin position="1"/>
        <end position="91"/>
    </location>
</feature>
<feature type="domain" description="bHLH" evidence="2">
    <location>
        <begin position="3"/>
        <end position="58"/>
    </location>
</feature>
<keyword id="KW-0341">Growth regulation</keyword>
<keyword id="KW-1185">Reference proteome</keyword>
<keyword id="KW-0804">Transcription</keyword>
<keyword id="KW-0805">Transcription regulation</keyword>
<comment type="function">
    <text evidence="1">Atypical and probable non DNA-binding bHLH transcription that integrates multiple signaling pathways to regulate cell elongation and plant development.</text>
</comment>
<comment type="similarity">
    <text>Belongs to the bHLH protein family.</text>
</comment>
<accession>A2XD15</accession>
<reference key="1">
    <citation type="journal article" date="2005" name="PLoS Biol.">
        <title>The genomes of Oryza sativa: a history of duplications.</title>
        <authorList>
            <person name="Yu J."/>
            <person name="Wang J."/>
            <person name="Lin W."/>
            <person name="Li S."/>
            <person name="Li H."/>
            <person name="Zhou J."/>
            <person name="Ni P."/>
            <person name="Dong W."/>
            <person name="Hu S."/>
            <person name="Zeng C."/>
            <person name="Zhang J."/>
            <person name="Zhang Y."/>
            <person name="Li R."/>
            <person name="Xu Z."/>
            <person name="Li S."/>
            <person name="Li X."/>
            <person name="Zheng H."/>
            <person name="Cong L."/>
            <person name="Lin L."/>
            <person name="Yin J."/>
            <person name="Geng J."/>
            <person name="Li G."/>
            <person name="Shi J."/>
            <person name="Liu J."/>
            <person name="Lv H."/>
            <person name="Li J."/>
            <person name="Wang J."/>
            <person name="Deng Y."/>
            <person name="Ran L."/>
            <person name="Shi X."/>
            <person name="Wang X."/>
            <person name="Wu Q."/>
            <person name="Li C."/>
            <person name="Ren X."/>
            <person name="Wang J."/>
            <person name="Wang X."/>
            <person name="Li D."/>
            <person name="Liu D."/>
            <person name="Zhang X."/>
            <person name="Ji Z."/>
            <person name="Zhao W."/>
            <person name="Sun Y."/>
            <person name="Zhang Z."/>
            <person name="Bao J."/>
            <person name="Han Y."/>
            <person name="Dong L."/>
            <person name="Ji J."/>
            <person name="Chen P."/>
            <person name="Wu S."/>
            <person name="Liu J."/>
            <person name="Xiao Y."/>
            <person name="Bu D."/>
            <person name="Tan J."/>
            <person name="Yang L."/>
            <person name="Ye C."/>
            <person name="Zhang J."/>
            <person name="Xu J."/>
            <person name="Zhou Y."/>
            <person name="Yu Y."/>
            <person name="Zhang B."/>
            <person name="Zhuang S."/>
            <person name="Wei H."/>
            <person name="Liu B."/>
            <person name="Lei M."/>
            <person name="Yu H."/>
            <person name="Li Y."/>
            <person name="Xu H."/>
            <person name="Wei S."/>
            <person name="He X."/>
            <person name="Fang L."/>
            <person name="Zhang Z."/>
            <person name="Zhang Y."/>
            <person name="Huang X."/>
            <person name="Su Z."/>
            <person name="Tong W."/>
            <person name="Li J."/>
            <person name="Tong Z."/>
            <person name="Li S."/>
            <person name="Ye J."/>
            <person name="Wang L."/>
            <person name="Fang L."/>
            <person name="Lei T."/>
            <person name="Chen C.-S."/>
            <person name="Chen H.-C."/>
            <person name="Xu Z."/>
            <person name="Li H."/>
            <person name="Huang H."/>
            <person name="Zhang F."/>
            <person name="Xu H."/>
            <person name="Li N."/>
            <person name="Zhao C."/>
            <person name="Li S."/>
            <person name="Dong L."/>
            <person name="Huang Y."/>
            <person name="Li L."/>
            <person name="Xi Y."/>
            <person name="Qi Q."/>
            <person name="Li W."/>
            <person name="Zhang B."/>
            <person name="Hu W."/>
            <person name="Zhang Y."/>
            <person name="Tian X."/>
            <person name="Jiao Y."/>
            <person name="Liang X."/>
            <person name="Jin J."/>
            <person name="Gao L."/>
            <person name="Zheng W."/>
            <person name="Hao B."/>
            <person name="Liu S.-M."/>
            <person name="Wang W."/>
            <person name="Yuan L."/>
            <person name="Cao M."/>
            <person name="McDermott J."/>
            <person name="Samudrala R."/>
            <person name="Wang J."/>
            <person name="Wong G.K.-S."/>
            <person name="Yang H."/>
        </authorList>
    </citation>
    <scope>NUCLEOTIDE SEQUENCE [LARGE SCALE GENOMIC DNA]</scope>
    <source>
        <strain>cv. 93-11</strain>
    </source>
</reference>
<dbReference type="EMBL" id="CM000128">
    <property type="protein sequence ID" value="EAY88725.1"/>
    <property type="molecule type" value="Genomic_DNA"/>
</dbReference>
<dbReference type="SMR" id="A2XD15"/>
<dbReference type="STRING" id="39946.A2XD15"/>
<dbReference type="EnsemblPlants" id="BGIOSGA011954-TA">
    <property type="protein sequence ID" value="BGIOSGA011954-PA"/>
    <property type="gene ID" value="BGIOSGA011954"/>
</dbReference>
<dbReference type="EnsemblPlants" id="OsGoSa_03g0005330.01">
    <property type="protein sequence ID" value="OsGoSa_03g0005330.01"/>
    <property type="gene ID" value="OsGoSa_03g0005330"/>
</dbReference>
<dbReference type="EnsemblPlants" id="OsIR64_03g0005280.01">
    <property type="protein sequence ID" value="OsIR64_03g0005280.01"/>
    <property type="gene ID" value="OsIR64_03g0005280"/>
</dbReference>
<dbReference type="EnsemblPlants" id="OsKYG_03g0005370.01">
    <property type="protein sequence ID" value="OsKYG_03g0005370.01"/>
    <property type="gene ID" value="OsKYG_03g0005370"/>
</dbReference>
<dbReference type="EnsemblPlants" id="OsLaMu_03g0005350.01">
    <property type="protein sequence ID" value="OsLaMu_03g0005350.01"/>
    <property type="gene ID" value="OsLaMu_03g0005350"/>
</dbReference>
<dbReference type="EnsemblPlants" id="OsLima_03g0005370.01">
    <property type="protein sequence ID" value="OsLima_03g0005370.01"/>
    <property type="gene ID" value="OsLima_03g0005370"/>
</dbReference>
<dbReference type="EnsemblPlants" id="OsLiXu_03g0005370.01">
    <property type="protein sequence ID" value="OsLiXu_03g0005370.01"/>
    <property type="gene ID" value="OsLiXu_03g0005370"/>
</dbReference>
<dbReference type="EnsemblPlants" id="OsMH63_03G005310_01">
    <property type="protein sequence ID" value="OsMH63_03G005310_01"/>
    <property type="gene ID" value="OsMH63_03G005310"/>
</dbReference>
<dbReference type="EnsemblPlants" id="OsPr106_03g0005390.01">
    <property type="protein sequence ID" value="OsPr106_03g0005390.01"/>
    <property type="gene ID" value="OsPr106_03g0005390"/>
</dbReference>
<dbReference type="EnsemblPlants" id="OsZS97_03G005200_01">
    <property type="protein sequence ID" value="OsZS97_03G005200_01"/>
    <property type="gene ID" value="OsZS97_03G005200"/>
</dbReference>
<dbReference type="Gramene" id="BGIOSGA011954-TA">
    <property type="protein sequence ID" value="BGIOSGA011954-PA"/>
    <property type="gene ID" value="BGIOSGA011954"/>
</dbReference>
<dbReference type="Gramene" id="OsGoSa_03g0005330.01">
    <property type="protein sequence ID" value="OsGoSa_03g0005330.01"/>
    <property type="gene ID" value="OsGoSa_03g0005330"/>
</dbReference>
<dbReference type="Gramene" id="OsIR64_03g0005280.01">
    <property type="protein sequence ID" value="OsIR64_03g0005280.01"/>
    <property type="gene ID" value="OsIR64_03g0005280"/>
</dbReference>
<dbReference type="Gramene" id="OsKYG_03g0005370.01">
    <property type="protein sequence ID" value="OsKYG_03g0005370.01"/>
    <property type="gene ID" value="OsKYG_03g0005370"/>
</dbReference>
<dbReference type="Gramene" id="OsLaMu_03g0005350.01">
    <property type="protein sequence ID" value="OsLaMu_03g0005350.01"/>
    <property type="gene ID" value="OsLaMu_03g0005350"/>
</dbReference>
<dbReference type="Gramene" id="OsLima_03g0005370.01">
    <property type="protein sequence ID" value="OsLima_03g0005370.01"/>
    <property type="gene ID" value="OsLima_03g0005370"/>
</dbReference>
<dbReference type="Gramene" id="OsLiXu_03g0005370.01">
    <property type="protein sequence ID" value="OsLiXu_03g0005370.01"/>
    <property type="gene ID" value="OsLiXu_03g0005370"/>
</dbReference>
<dbReference type="Gramene" id="OsMH63_03G005310_01">
    <property type="protein sequence ID" value="OsMH63_03G005310_01"/>
    <property type="gene ID" value="OsMH63_03G005310"/>
</dbReference>
<dbReference type="Gramene" id="OsPr106_03g0005390.01">
    <property type="protein sequence ID" value="OsPr106_03g0005390.01"/>
    <property type="gene ID" value="OsPr106_03g0005390"/>
</dbReference>
<dbReference type="Gramene" id="OsZS97_03G005200_01">
    <property type="protein sequence ID" value="OsZS97_03G005200_01"/>
    <property type="gene ID" value="OsZS97_03G005200"/>
</dbReference>
<dbReference type="HOGENOM" id="CLU_183267_0_0_1"/>
<dbReference type="OMA" id="KETCIYI"/>
<dbReference type="OrthoDB" id="988630at2759"/>
<dbReference type="Proteomes" id="UP000007015">
    <property type="component" value="Chromosome 3"/>
</dbReference>
<dbReference type="GO" id="GO:0046983">
    <property type="term" value="F:protein dimerization activity"/>
    <property type="evidence" value="ECO:0007669"/>
    <property type="project" value="InterPro"/>
</dbReference>
<dbReference type="GO" id="GO:0006355">
    <property type="term" value="P:regulation of DNA-templated transcription"/>
    <property type="evidence" value="ECO:0007669"/>
    <property type="project" value="InterPro"/>
</dbReference>
<dbReference type="GO" id="GO:0040008">
    <property type="term" value="P:regulation of growth"/>
    <property type="evidence" value="ECO:0007669"/>
    <property type="project" value="InterPro"/>
</dbReference>
<dbReference type="Gene3D" id="4.10.280.10">
    <property type="entry name" value="Helix-loop-helix DNA-binding domain"/>
    <property type="match status" value="1"/>
</dbReference>
<dbReference type="InterPro" id="IPR011598">
    <property type="entry name" value="bHLH_dom"/>
</dbReference>
<dbReference type="InterPro" id="IPR036638">
    <property type="entry name" value="HLH_DNA-bd_sf"/>
</dbReference>
<dbReference type="InterPro" id="IPR044293">
    <property type="entry name" value="PRE"/>
</dbReference>
<dbReference type="PANTHER" id="PTHR46446">
    <property type="entry name" value="TRANSCRIPTION FACTOR PRE"/>
    <property type="match status" value="1"/>
</dbReference>
<dbReference type="PANTHER" id="PTHR46446:SF28">
    <property type="entry name" value="TRANSCRIPTION FACTOR PRE5"/>
    <property type="match status" value="1"/>
</dbReference>
<dbReference type="Pfam" id="PF23174">
    <property type="entry name" value="bHLH_ILI"/>
    <property type="match status" value="1"/>
</dbReference>
<dbReference type="SUPFAM" id="SSF47459">
    <property type="entry name" value="HLH, helix-loop-helix DNA-binding domain"/>
    <property type="match status" value="1"/>
</dbReference>
<dbReference type="PROSITE" id="PS50888">
    <property type="entry name" value="BHLH"/>
    <property type="match status" value="1"/>
</dbReference>